<evidence type="ECO:0000255" key="1"/>
<evidence type="ECO:0000269" key="2">
    <source>
    </source>
</evidence>
<evidence type="ECO:0000305" key="3">
    <source>
    </source>
</evidence>
<proteinExistence type="predicted"/>
<reference key="1">
    <citation type="journal article" date="1997" name="Gene">
        <title>The complete nucleotide sequence and functional organization of Bacillus subtilis bacteriophage SPP1.</title>
        <authorList>
            <person name="Alonso J.C."/>
            <person name="Luder G."/>
            <person name="Stiege A.C."/>
            <person name="Chai S."/>
            <person name="Weise F."/>
            <person name="Trautner T.A."/>
        </authorList>
    </citation>
    <scope>NUCLEOTIDE SEQUENCE [LARGE SCALE GENOMIC DNA]</scope>
</reference>
<reference key="2">
    <citation type="journal article" date="2007" name="EMBO J.">
        <title>Structure of bacteriophage SPP1 tail reveals trigger for DNA ejection.</title>
        <authorList>
            <person name="Plisson C."/>
            <person name="White H.E."/>
            <person name="Auzat I."/>
            <person name="Zafarani A."/>
            <person name="Sao-Jose C."/>
            <person name="Lhuillier S."/>
            <person name="Tavares P."/>
            <person name="Orlova E.V."/>
        </authorList>
    </citation>
    <scope>FUNCTION</scope>
    <scope>SUBCELLULAR LOCATION</scope>
</reference>
<feature type="chain" id="PRO_0000408482" description="Tail tape measure protein gp18">
    <location>
        <begin position="1"/>
        <end position="1032"/>
    </location>
</feature>
<feature type="coiled-coil region" evidence="1">
    <location>
        <begin position="131"/>
        <end position="178"/>
    </location>
</feature>
<sequence length="1032" mass="110862">MEGARLQAVVTANIREFQRKMAAVNRIVRTTANRVTVTVDSRTEKFENAMNRLARITGSLSTVIGGALRGALMSAFPAAVPAAASLVGVVGSLGPMLGVAAGGAAGLGSAFATAGAGAVAYGALAATSIGGVIKASQDLDKLQAKLDDATDAKERAKIMEQIKNLQASLGKEERKALDTLEDFKSNWQDIAKSVQKPILRTFTTSLNTFKSVLNQLQPMFRGLARGGESLAKSMQNAFKAPDMKNFINYLNTEAPGAFVSFGKISGNIIRTVMNLMVAFGPLGKNMTKSIEGATAAWVKWSASLGSSVKFQKFIAYVQTNGPKLLKIIGNLSSGITSLFTGFAPLSADMMTSLVNLTARFKEWAASAKDSKEFKSFIDYIRTNGPIVWDSLGKIAKTLINLAVAMAPVGSEVLKMVNSFAQWTAATTKAHPEIGKFMAVAISLGGALRALTPVIISFQTLFGGFSSIGKAIDLIKKFKTSAAGIKLAAAIADMKLFTKTNALMAAQMAKTKFTNMITQLGLFGTKLRLQMSIMAAYLKQLVVAAAQQTAFAVKMAASYAQMKITSFITALKNGIIQMGLWIKNMAIMAAQSAANAVKMAAAWTAARISAFASMLAAGIKQMIAFGVRLAALAAAAAANAARMAASWVIAMGPIGWITAAVIALVALIIANWDKIKEYTVKIWGAVSKWLSDAWNKIKQAASVVWQALVTLIKKNFEMQKKIVTTVWNTIKSVSSKVWNGIKSFLSSVWNGIVNAGKTVWNGLKTFFTAWLNFQKKTWSTIWNAVKTAVTKVWKGIVSVGKTVWNGLKSFFTSWLNGQKKLFSTVWNAVKTAVTNVWNKLKSAASSTFNALKSSVTNIMNKVKDKIKSIWNSVMSFFKGINLGSIGRNIMQGLINGVTSMWGRVTSTFSRLTNAIPKTIKKILGIHSPSRLMRDEIGYHIGTGLVKGITGTEGMVTKAAASLAKSAVPEVPTVPELAVNSSYSGGMVEQSVNASLENFDLPEKNIIIQMDKREVGRAVEEPVREFTGRKRKRR</sequence>
<name>TMP_BPSPP</name>
<organism>
    <name type="scientific">Bacillus phage SPP1</name>
    <name type="common">Bacteriophage SPP1</name>
    <dbReference type="NCBI Taxonomy" id="10724"/>
    <lineage>
        <taxon>Viruses</taxon>
        <taxon>Duplodnaviria</taxon>
        <taxon>Heunggongvirae</taxon>
        <taxon>Uroviricota</taxon>
        <taxon>Caudoviricetes</taxon>
    </lineage>
</organism>
<keyword id="KW-0175">Coiled coil</keyword>
<keyword id="KW-1185">Reference proteome</keyword>
<keyword id="KW-1188">Viral release from host cell</keyword>
<keyword id="KW-1245">Viral tail assembly</keyword>
<keyword id="KW-0946">Virion</keyword>
<organismHost>
    <name type="scientific">Bacillus subtilis</name>
    <dbReference type="NCBI Taxonomy" id="1423"/>
</organismHost>
<dbReference type="EMBL" id="X97918">
    <property type="protein sequence ID" value="CAL18687.1"/>
    <property type="molecule type" value="Genomic_DNA"/>
</dbReference>
<dbReference type="RefSeq" id="YP_009268705.1">
    <property type="nucleotide sequence ID" value="NC_004166.2"/>
</dbReference>
<dbReference type="SMR" id="Q0PDK7"/>
<dbReference type="GeneID" id="955328"/>
<dbReference type="KEGG" id="vg:955328"/>
<dbReference type="OrthoDB" id="138at10239"/>
<dbReference type="Proteomes" id="UP000002559">
    <property type="component" value="Genome"/>
</dbReference>
<dbReference type="GO" id="GO:0044423">
    <property type="term" value="C:virion component"/>
    <property type="evidence" value="ECO:0007669"/>
    <property type="project" value="UniProtKB-KW"/>
</dbReference>
<dbReference type="GO" id="GO:0098003">
    <property type="term" value="P:viral tail assembly"/>
    <property type="evidence" value="ECO:0000314"/>
    <property type="project" value="UniProtKB"/>
</dbReference>
<dbReference type="Gene3D" id="1.20.1170.10">
    <property type="match status" value="1"/>
</dbReference>
<dbReference type="Gene3D" id="1.20.120.20">
    <property type="entry name" value="Apolipoprotein"/>
    <property type="match status" value="1"/>
</dbReference>
<dbReference type="Gene3D" id="1.10.287.700">
    <property type="entry name" value="Helix hairpin bin"/>
    <property type="match status" value="1"/>
</dbReference>
<dbReference type="PANTHER" id="PTHR37813">
    <property type="entry name" value="FELS-2 PROPHAGE PROTEIN"/>
    <property type="match status" value="1"/>
</dbReference>
<dbReference type="PANTHER" id="PTHR37813:SF1">
    <property type="entry name" value="FELS-2 PROPHAGE PROTEIN"/>
    <property type="match status" value="1"/>
</dbReference>
<protein>
    <recommendedName>
        <fullName>Tail tape measure protein gp18</fullName>
    </recommendedName>
    <alternativeName>
        <fullName>Gene product 18</fullName>
        <shortName>gp18</shortName>
    </alternativeName>
</protein>
<comment type="function">
    <text evidence="2">Serves as a base for tail tube protein polymerization and acts as a template for tail length determination.</text>
</comment>
<comment type="subcellular location">
    <subcellularLocation>
        <location>Virion</location>
    </subcellularLocation>
    <text evidence="3">Probably present inside the tail tube.</text>
</comment>
<accession>Q0PDK7</accession>